<name>SYFA_ALTMD</name>
<evidence type="ECO:0000255" key="1">
    <source>
        <dbReference type="HAMAP-Rule" id="MF_00281"/>
    </source>
</evidence>
<accession>B4RS43</accession>
<accession>F2G9B6</accession>
<keyword id="KW-0030">Aminoacyl-tRNA synthetase</keyword>
<keyword id="KW-0067">ATP-binding</keyword>
<keyword id="KW-0963">Cytoplasm</keyword>
<keyword id="KW-0436">Ligase</keyword>
<keyword id="KW-0460">Magnesium</keyword>
<keyword id="KW-0479">Metal-binding</keyword>
<keyword id="KW-0547">Nucleotide-binding</keyword>
<keyword id="KW-0648">Protein biosynthesis</keyword>
<comment type="catalytic activity">
    <reaction evidence="1">
        <text>tRNA(Phe) + L-phenylalanine + ATP = L-phenylalanyl-tRNA(Phe) + AMP + diphosphate + H(+)</text>
        <dbReference type="Rhea" id="RHEA:19413"/>
        <dbReference type="Rhea" id="RHEA-COMP:9668"/>
        <dbReference type="Rhea" id="RHEA-COMP:9699"/>
        <dbReference type="ChEBI" id="CHEBI:15378"/>
        <dbReference type="ChEBI" id="CHEBI:30616"/>
        <dbReference type="ChEBI" id="CHEBI:33019"/>
        <dbReference type="ChEBI" id="CHEBI:58095"/>
        <dbReference type="ChEBI" id="CHEBI:78442"/>
        <dbReference type="ChEBI" id="CHEBI:78531"/>
        <dbReference type="ChEBI" id="CHEBI:456215"/>
        <dbReference type="EC" id="6.1.1.20"/>
    </reaction>
</comment>
<comment type="cofactor">
    <cofactor evidence="1">
        <name>Mg(2+)</name>
        <dbReference type="ChEBI" id="CHEBI:18420"/>
    </cofactor>
    <text evidence="1">Binds 2 magnesium ions per tetramer.</text>
</comment>
<comment type="subunit">
    <text evidence="1">Tetramer of two alpha and two beta subunits.</text>
</comment>
<comment type="subcellular location">
    <subcellularLocation>
        <location evidence="1">Cytoplasm</location>
    </subcellularLocation>
</comment>
<comment type="similarity">
    <text evidence="1">Belongs to the class-II aminoacyl-tRNA synthetase family. Phe-tRNA synthetase alpha subunit type 1 subfamily.</text>
</comment>
<feature type="chain" id="PRO_1000114845" description="Phenylalanine--tRNA ligase alpha subunit">
    <location>
        <begin position="1"/>
        <end position="326"/>
    </location>
</feature>
<feature type="binding site" evidence="1">
    <location>
        <position position="251"/>
    </location>
    <ligand>
        <name>Mg(2+)</name>
        <dbReference type="ChEBI" id="CHEBI:18420"/>
        <note>shared with beta subunit</note>
    </ligand>
</feature>
<gene>
    <name evidence="1" type="primary">pheS</name>
    <name type="ordered locus">MADE_1008275</name>
</gene>
<protein>
    <recommendedName>
        <fullName evidence="1">Phenylalanine--tRNA ligase alpha subunit</fullName>
        <ecNumber evidence="1">6.1.1.20</ecNumber>
    </recommendedName>
    <alternativeName>
        <fullName evidence="1">Phenylalanyl-tRNA synthetase alpha subunit</fullName>
        <shortName evidence="1">PheRS</shortName>
    </alternativeName>
</protein>
<proteinExistence type="inferred from homology"/>
<organism>
    <name type="scientific">Alteromonas mediterranea (strain DSM 17117 / CIP 110805 / LMG 28347 / Deep ecotype)</name>
    <dbReference type="NCBI Taxonomy" id="1774373"/>
    <lineage>
        <taxon>Bacteria</taxon>
        <taxon>Pseudomonadati</taxon>
        <taxon>Pseudomonadota</taxon>
        <taxon>Gammaproteobacteria</taxon>
        <taxon>Alteromonadales</taxon>
        <taxon>Alteromonadaceae</taxon>
        <taxon>Alteromonas/Salinimonas group</taxon>
        <taxon>Alteromonas</taxon>
    </lineage>
</organism>
<dbReference type="EC" id="6.1.1.20" evidence="1"/>
<dbReference type="EMBL" id="CP001103">
    <property type="protein sequence ID" value="AEA97795.1"/>
    <property type="molecule type" value="Genomic_DNA"/>
</dbReference>
<dbReference type="RefSeq" id="WP_012518127.1">
    <property type="nucleotide sequence ID" value="NC_011138.3"/>
</dbReference>
<dbReference type="SMR" id="B4RS43"/>
<dbReference type="GeneID" id="56266731"/>
<dbReference type="KEGG" id="amc:MADE_1008275"/>
<dbReference type="HOGENOM" id="CLU_025086_0_1_6"/>
<dbReference type="Proteomes" id="UP000001870">
    <property type="component" value="Chromosome"/>
</dbReference>
<dbReference type="GO" id="GO:0005737">
    <property type="term" value="C:cytoplasm"/>
    <property type="evidence" value="ECO:0007669"/>
    <property type="project" value="UniProtKB-SubCell"/>
</dbReference>
<dbReference type="GO" id="GO:0005524">
    <property type="term" value="F:ATP binding"/>
    <property type="evidence" value="ECO:0007669"/>
    <property type="project" value="UniProtKB-UniRule"/>
</dbReference>
<dbReference type="GO" id="GO:0000287">
    <property type="term" value="F:magnesium ion binding"/>
    <property type="evidence" value="ECO:0007669"/>
    <property type="project" value="UniProtKB-UniRule"/>
</dbReference>
<dbReference type="GO" id="GO:0004826">
    <property type="term" value="F:phenylalanine-tRNA ligase activity"/>
    <property type="evidence" value="ECO:0007669"/>
    <property type="project" value="UniProtKB-UniRule"/>
</dbReference>
<dbReference type="GO" id="GO:0000049">
    <property type="term" value="F:tRNA binding"/>
    <property type="evidence" value="ECO:0007669"/>
    <property type="project" value="InterPro"/>
</dbReference>
<dbReference type="GO" id="GO:0006432">
    <property type="term" value="P:phenylalanyl-tRNA aminoacylation"/>
    <property type="evidence" value="ECO:0007669"/>
    <property type="project" value="UniProtKB-UniRule"/>
</dbReference>
<dbReference type="CDD" id="cd00496">
    <property type="entry name" value="PheRS_alpha_core"/>
    <property type="match status" value="1"/>
</dbReference>
<dbReference type="FunFam" id="3.30.930.10:FF:000003">
    <property type="entry name" value="Phenylalanine--tRNA ligase alpha subunit"/>
    <property type="match status" value="1"/>
</dbReference>
<dbReference type="Gene3D" id="3.30.930.10">
    <property type="entry name" value="Bira Bifunctional Protein, Domain 2"/>
    <property type="match status" value="1"/>
</dbReference>
<dbReference type="HAMAP" id="MF_00281">
    <property type="entry name" value="Phe_tRNA_synth_alpha1"/>
    <property type="match status" value="1"/>
</dbReference>
<dbReference type="InterPro" id="IPR006195">
    <property type="entry name" value="aa-tRNA-synth_II"/>
</dbReference>
<dbReference type="InterPro" id="IPR045864">
    <property type="entry name" value="aa-tRNA-synth_II/BPL/LPL"/>
</dbReference>
<dbReference type="InterPro" id="IPR004529">
    <property type="entry name" value="Phe-tRNA-synth_IIc_asu"/>
</dbReference>
<dbReference type="InterPro" id="IPR004188">
    <property type="entry name" value="Phe-tRNA_ligase_II_N"/>
</dbReference>
<dbReference type="InterPro" id="IPR022911">
    <property type="entry name" value="Phe_tRNA_ligase_alpha1_bac"/>
</dbReference>
<dbReference type="InterPro" id="IPR002319">
    <property type="entry name" value="Phenylalanyl-tRNA_Synthase"/>
</dbReference>
<dbReference type="InterPro" id="IPR010978">
    <property type="entry name" value="tRNA-bd_arm"/>
</dbReference>
<dbReference type="NCBIfam" id="TIGR00468">
    <property type="entry name" value="pheS"/>
    <property type="match status" value="1"/>
</dbReference>
<dbReference type="PANTHER" id="PTHR11538:SF41">
    <property type="entry name" value="PHENYLALANINE--TRNA LIGASE, MITOCHONDRIAL"/>
    <property type="match status" value="1"/>
</dbReference>
<dbReference type="PANTHER" id="PTHR11538">
    <property type="entry name" value="PHENYLALANYL-TRNA SYNTHETASE"/>
    <property type="match status" value="1"/>
</dbReference>
<dbReference type="Pfam" id="PF02912">
    <property type="entry name" value="Phe_tRNA-synt_N"/>
    <property type="match status" value="1"/>
</dbReference>
<dbReference type="Pfam" id="PF01409">
    <property type="entry name" value="tRNA-synt_2d"/>
    <property type="match status" value="1"/>
</dbReference>
<dbReference type="SUPFAM" id="SSF55681">
    <property type="entry name" value="Class II aaRS and biotin synthetases"/>
    <property type="match status" value="1"/>
</dbReference>
<dbReference type="SUPFAM" id="SSF46589">
    <property type="entry name" value="tRNA-binding arm"/>
    <property type="match status" value="1"/>
</dbReference>
<dbReference type="PROSITE" id="PS50862">
    <property type="entry name" value="AA_TRNA_LIGASE_II"/>
    <property type="match status" value="1"/>
</dbReference>
<reference key="1">
    <citation type="journal article" date="2008" name="ISME J.">
        <title>Comparative genomics of two ecotypes of the marine planktonic copiotroph Alteromonas macleodii suggests alternative lifestyles associated with different kinds of particulate organic matter.</title>
        <authorList>
            <person name="Ivars-Martinez E."/>
            <person name="Martin-Cuadrado A.-B."/>
            <person name="D'Auria G."/>
            <person name="Mira A."/>
            <person name="Ferriera S."/>
            <person name="Johnson J."/>
            <person name="Friedman R."/>
            <person name="Rodriguez-Valera F."/>
        </authorList>
    </citation>
    <scope>NUCLEOTIDE SEQUENCE [LARGE SCALE GENOMIC DNA]</scope>
    <source>
        <strain>DSM 17117 / CIP 110805 / LMG 28347 / Deep ecotype</strain>
    </source>
</reference>
<sequence>MELDAIINQAQSQIDAAQDAATLDQVRVEFMGKKGKLTDLLKGLGKLSNEERPAAGQKINQAKQVIQQAISAKGEFLRTEELNKKLAEEAVDVTLPGRTEKPGNLHPVSRTIARIESFFGELGFSVKTGPEIEDGFHNFDALNIPANHPARADHDTFYFNPDMMLRTQTSGVQIRTMEAEKPPLRIISPGRVYRNDYDQTHTPMFHQVEGLMVDKNVSFTDLKGILHDFLHHFFEESLEIRFRPSYFPFTEPSAEVDVMGKNGQWLEVLGCGMVHPNVLKAVGIDPEEYTGFAFGMGVERLTMLRYGVNDLRAFFENDLRFLKQFN</sequence>